<gene>
    <name evidence="1" type="primary">uppP2</name>
    <name type="ordered locus">Bcep18194_A4462</name>
</gene>
<proteinExistence type="inferred from homology"/>
<reference key="1">
    <citation type="submission" date="2005-10" db="EMBL/GenBank/DDBJ databases">
        <title>Complete sequence of chromosome 1 of Burkholderia sp. 383.</title>
        <authorList>
            <consortium name="US DOE Joint Genome Institute"/>
            <person name="Copeland A."/>
            <person name="Lucas S."/>
            <person name="Lapidus A."/>
            <person name="Barry K."/>
            <person name="Detter J.C."/>
            <person name="Glavina T."/>
            <person name="Hammon N."/>
            <person name="Israni S."/>
            <person name="Pitluck S."/>
            <person name="Chain P."/>
            <person name="Malfatti S."/>
            <person name="Shin M."/>
            <person name="Vergez L."/>
            <person name="Schmutz J."/>
            <person name="Larimer F."/>
            <person name="Land M."/>
            <person name="Kyrpides N."/>
            <person name="Lykidis A."/>
            <person name="Richardson P."/>
        </authorList>
    </citation>
    <scope>NUCLEOTIDE SEQUENCE [LARGE SCALE GENOMIC DNA]</scope>
    <source>
        <strain>ATCC 17760 / DSM 23089 / LMG 22485 / NCIMB 9086 / R18194 / 383</strain>
    </source>
</reference>
<sequence>MSLWFLVFLSVLQGVTELFPVSSLGHTLLVPALFGMHIDKHAPQLLPFLVALHLGTALALLWYFRARWVALIGGFFAQLGGRKNDDGHLMWALIIGTIPTGIVGLLLEKRIERVFHDLRIVAIALIVNGVLLWLGDRIQRSRAHQAPEKMTFKQAFFVGLAQIGALIPGFSRSGLTMIAGNAAGLTAEKAAEFSFLLGTPIIFAAGVLELPKLFHARDQLADALLGGVLTAIAAYLSVRFLMRYFEGRGRLASFGVYCVIAGVFCLGWFMLHPQPV</sequence>
<evidence type="ECO:0000255" key="1">
    <source>
        <dbReference type="HAMAP-Rule" id="MF_01006"/>
    </source>
</evidence>
<dbReference type="EC" id="3.6.1.27" evidence="1"/>
<dbReference type="EMBL" id="CP000151">
    <property type="protein sequence ID" value="ABB08058.1"/>
    <property type="molecule type" value="Genomic_DNA"/>
</dbReference>
<dbReference type="RefSeq" id="WP_011351628.1">
    <property type="nucleotide sequence ID" value="NZ_CADFCT010000007.1"/>
</dbReference>
<dbReference type="SMR" id="Q39HK8"/>
<dbReference type="GeneID" id="45094359"/>
<dbReference type="KEGG" id="bur:Bcep18194_A4462"/>
<dbReference type="PATRIC" id="fig|482957.22.peg.1361"/>
<dbReference type="HOGENOM" id="CLU_060296_1_1_4"/>
<dbReference type="Proteomes" id="UP000002705">
    <property type="component" value="Chromosome 1"/>
</dbReference>
<dbReference type="GO" id="GO:0005886">
    <property type="term" value="C:plasma membrane"/>
    <property type="evidence" value="ECO:0007669"/>
    <property type="project" value="UniProtKB-SubCell"/>
</dbReference>
<dbReference type="GO" id="GO:0050380">
    <property type="term" value="F:undecaprenyl-diphosphatase activity"/>
    <property type="evidence" value="ECO:0007669"/>
    <property type="project" value="UniProtKB-UniRule"/>
</dbReference>
<dbReference type="GO" id="GO:0071555">
    <property type="term" value="P:cell wall organization"/>
    <property type="evidence" value="ECO:0007669"/>
    <property type="project" value="UniProtKB-KW"/>
</dbReference>
<dbReference type="GO" id="GO:0009252">
    <property type="term" value="P:peptidoglycan biosynthetic process"/>
    <property type="evidence" value="ECO:0007669"/>
    <property type="project" value="UniProtKB-KW"/>
</dbReference>
<dbReference type="GO" id="GO:0008360">
    <property type="term" value="P:regulation of cell shape"/>
    <property type="evidence" value="ECO:0007669"/>
    <property type="project" value="UniProtKB-KW"/>
</dbReference>
<dbReference type="GO" id="GO:0046677">
    <property type="term" value="P:response to antibiotic"/>
    <property type="evidence" value="ECO:0007669"/>
    <property type="project" value="UniProtKB-UniRule"/>
</dbReference>
<dbReference type="HAMAP" id="MF_01006">
    <property type="entry name" value="Undec_diphosphatase"/>
    <property type="match status" value="1"/>
</dbReference>
<dbReference type="InterPro" id="IPR003824">
    <property type="entry name" value="UppP"/>
</dbReference>
<dbReference type="PANTHER" id="PTHR30622">
    <property type="entry name" value="UNDECAPRENYL-DIPHOSPHATASE"/>
    <property type="match status" value="1"/>
</dbReference>
<dbReference type="PANTHER" id="PTHR30622:SF4">
    <property type="entry name" value="UNDECAPRENYL-DIPHOSPHATASE"/>
    <property type="match status" value="1"/>
</dbReference>
<dbReference type="Pfam" id="PF02673">
    <property type="entry name" value="BacA"/>
    <property type="match status" value="1"/>
</dbReference>
<protein>
    <recommendedName>
        <fullName evidence="1">Undecaprenyl-diphosphatase 2</fullName>
        <ecNumber evidence="1">3.6.1.27</ecNumber>
    </recommendedName>
    <alternativeName>
        <fullName evidence="1">Bacitracin resistance protein 2</fullName>
    </alternativeName>
    <alternativeName>
        <fullName evidence="1">Undecaprenyl pyrophosphate phosphatase 2</fullName>
    </alternativeName>
</protein>
<organism>
    <name type="scientific">Burkholderia lata (strain ATCC 17760 / DSM 23089 / LMG 22485 / NCIMB 9086 / R18194 / 383)</name>
    <dbReference type="NCBI Taxonomy" id="482957"/>
    <lineage>
        <taxon>Bacteria</taxon>
        <taxon>Pseudomonadati</taxon>
        <taxon>Pseudomonadota</taxon>
        <taxon>Betaproteobacteria</taxon>
        <taxon>Burkholderiales</taxon>
        <taxon>Burkholderiaceae</taxon>
        <taxon>Burkholderia</taxon>
        <taxon>Burkholderia cepacia complex</taxon>
    </lineage>
</organism>
<feature type="chain" id="PRO_0000227611" description="Undecaprenyl-diphosphatase 2">
    <location>
        <begin position="1"/>
        <end position="276"/>
    </location>
</feature>
<feature type="transmembrane region" description="Helical" evidence="1">
    <location>
        <begin position="1"/>
        <end position="21"/>
    </location>
</feature>
<feature type="transmembrane region" description="Helical" evidence="1">
    <location>
        <begin position="44"/>
        <end position="64"/>
    </location>
</feature>
<feature type="transmembrane region" description="Helical" evidence="1">
    <location>
        <begin position="87"/>
        <end position="107"/>
    </location>
</feature>
<feature type="transmembrane region" description="Helical" evidence="1">
    <location>
        <begin position="114"/>
        <end position="134"/>
    </location>
</feature>
<feature type="transmembrane region" description="Helical" evidence="1">
    <location>
        <begin position="150"/>
        <end position="170"/>
    </location>
</feature>
<feature type="transmembrane region" description="Helical" evidence="1">
    <location>
        <begin position="190"/>
        <end position="210"/>
    </location>
</feature>
<feature type="transmembrane region" description="Helical" evidence="1">
    <location>
        <begin position="222"/>
        <end position="242"/>
    </location>
</feature>
<feature type="transmembrane region" description="Helical" evidence="1">
    <location>
        <begin position="251"/>
        <end position="271"/>
    </location>
</feature>
<name>UPPP2_BURL3</name>
<comment type="function">
    <text evidence="1">Catalyzes the dephosphorylation of undecaprenyl diphosphate (UPP). Confers resistance to bacitracin.</text>
</comment>
<comment type="catalytic activity">
    <reaction evidence="1">
        <text>di-trans,octa-cis-undecaprenyl diphosphate + H2O = di-trans,octa-cis-undecaprenyl phosphate + phosphate + H(+)</text>
        <dbReference type="Rhea" id="RHEA:28094"/>
        <dbReference type="ChEBI" id="CHEBI:15377"/>
        <dbReference type="ChEBI" id="CHEBI:15378"/>
        <dbReference type="ChEBI" id="CHEBI:43474"/>
        <dbReference type="ChEBI" id="CHEBI:58405"/>
        <dbReference type="ChEBI" id="CHEBI:60392"/>
        <dbReference type="EC" id="3.6.1.27"/>
    </reaction>
</comment>
<comment type="subcellular location">
    <subcellularLocation>
        <location evidence="1">Cell inner membrane</location>
        <topology evidence="1">Multi-pass membrane protein</topology>
    </subcellularLocation>
</comment>
<comment type="miscellaneous">
    <text>Bacitracin is thought to be involved in the inhibition of peptidoglycan synthesis by sequestering undecaprenyl diphosphate, thereby reducing the pool of lipid carrier available.</text>
</comment>
<comment type="similarity">
    <text evidence="1">Belongs to the UppP family.</text>
</comment>
<keyword id="KW-0046">Antibiotic resistance</keyword>
<keyword id="KW-0997">Cell inner membrane</keyword>
<keyword id="KW-1003">Cell membrane</keyword>
<keyword id="KW-0133">Cell shape</keyword>
<keyword id="KW-0961">Cell wall biogenesis/degradation</keyword>
<keyword id="KW-0378">Hydrolase</keyword>
<keyword id="KW-0472">Membrane</keyword>
<keyword id="KW-0573">Peptidoglycan synthesis</keyword>
<keyword id="KW-0812">Transmembrane</keyword>
<keyword id="KW-1133">Transmembrane helix</keyword>
<accession>Q39HK8</accession>